<comment type="function">
    <text evidence="1">Catalyzes the oxidation of 5,10-methylenetetrahydrofolate to 5,10-methenyltetrahydrofolate and then the hydrolysis of 5,10-methenyltetrahydrofolate to 10-formyltetrahydrofolate.</text>
</comment>
<comment type="catalytic activity">
    <reaction evidence="1">
        <text>(6R)-5,10-methylene-5,6,7,8-tetrahydrofolate + NADP(+) = (6R)-5,10-methenyltetrahydrofolate + NADPH</text>
        <dbReference type="Rhea" id="RHEA:22812"/>
        <dbReference type="ChEBI" id="CHEBI:15636"/>
        <dbReference type="ChEBI" id="CHEBI:57455"/>
        <dbReference type="ChEBI" id="CHEBI:57783"/>
        <dbReference type="ChEBI" id="CHEBI:58349"/>
        <dbReference type="EC" id="1.5.1.5"/>
    </reaction>
</comment>
<comment type="catalytic activity">
    <reaction evidence="1">
        <text>(6R)-5,10-methenyltetrahydrofolate + H2O = (6R)-10-formyltetrahydrofolate + H(+)</text>
        <dbReference type="Rhea" id="RHEA:23700"/>
        <dbReference type="ChEBI" id="CHEBI:15377"/>
        <dbReference type="ChEBI" id="CHEBI:15378"/>
        <dbReference type="ChEBI" id="CHEBI:57455"/>
        <dbReference type="ChEBI" id="CHEBI:195366"/>
        <dbReference type="EC" id="3.5.4.9"/>
    </reaction>
</comment>
<comment type="pathway">
    <text evidence="1">One-carbon metabolism; tetrahydrofolate interconversion.</text>
</comment>
<comment type="subunit">
    <text evidence="1">Homodimer.</text>
</comment>
<comment type="similarity">
    <text evidence="1">Belongs to the tetrahydrofolate dehydrogenase/cyclohydrolase family.</text>
</comment>
<comment type="sequence caution" evidence="2">
    <conflict type="erroneous initiation">
        <sequence resource="EMBL-CDS" id="ABV73538"/>
    </conflict>
</comment>
<accession>A8EYV5</accession>
<proteinExistence type="inferred from homology"/>
<organism>
    <name type="scientific">Rickettsia canadensis (strain McKiel)</name>
    <dbReference type="NCBI Taxonomy" id="293613"/>
    <lineage>
        <taxon>Bacteria</taxon>
        <taxon>Pseudomonadati</taxon>
        <taxon>Pseudomonadota</taxon>
        <taxon>Alphaproteobacteria</taxon>
        <taxon>Rickettsiales</taxon>
        <taxon>Rickettsiaceae</taxon>
        <taxon>Rickettsieae</taxon>
        <taxon>Rickettsia</taxon>
        <taxon>belli group</taxon>
    </lineage>
</organism>
<gene>
    <name evidence="1" type="primary">folD</name>
    <name type="ordered locus">A1E_02990</name>
</gene>
<evidence type="ECO:0000255" key="1">
    <source>
        <dbReference type="HAMAP-Rule" id="MF_01576"/>
    </source>
</evidence>
<evidence type="ECO:0000305" key="2"/>
<feature type="chain" id="PRO_0000318787" description="Bifunctional protein FolD">
    <location>
        <begin position="1"/>
        <end position="288"/>
    </location>
</feature>
<feature type="binding site" evidence="1">
    <location>
        <begin position="166"/>
        <end position="168"/>
    </location>
    <ligand>
        <name>NADP(+)</name>
        <dbReference type="ChEBI" id="CHEBI:58349"/>
    </ligand>
</feature>
<feature type="binding site" evidence="1">
    <location>
        <position position="191"/>
    </location>
    <ligand>
        <name>NADP(+)</name>
        <dbReference type="ChEBI" id="CHEBI:58349"/>
    </ligand>
</feature>
<feature type="binding site" evidence="1">
    <location>
        <position position="232"/>
    </location>
    <ligand>
        <name>NADP(+)</name>
        <dbReference type="ChEBI" id="CHEBI:58349"/>
    </ligand>
</feature>
<name>FOLD_RICCK</name>
<reference key="1">
    <citation type="submission" date="2007-09" db="EMBL/GenBank/DDBJ databases">
        <title>Complete genome sequence of Rickettsia canadensis.</title>
        <authorList>
            <person name="Madan A."/>
            <person name="Fahey J."/>
            <person name="Helton E."/>
            <person name="Ketteman M."/>
            <person name="Madan A."/>
            <person name="Rodrigues S."/>
            <person name="Sanchez A."/>
            <person name="Whiting M."/>
            <person name="Dasch G."/>
            <person name="Eremeeva M."/>
        </authorList>
    </citation>
    <scope>NUCLEOTIDE SEQUENCE [LARGE SCALE GENOMIC DNA]</scope>
    <source>
        <strain>McKiel</strain>
    </source>
</reference>
<sequence>MNNIIDGKALANEILADLKLEIQELKDKTNTSPKLAIVLVGNNPASIIYVKHKIKNAHNIGIDTLLVNLSTNIHTDDLILKINELNLNNEISGIIVQLPLPRSIDTNKILSAVLPLKDIDGFHPLNVGYLHSGISQGFIPCTALGCLAVIKKYETNLSGKNVVIIGRSNIVGKPLSALLLKEHCSVTICHSKSQNLSKISSKADIVIAAIGSPVKLTAEYFNPESIVIDVGINRINGNKIIGDVDFENVKSKVKYITPVPGGIGPMTIAFLLNNTVKAFKDSYSTVCH</sequence>
<protein>
    <recommendedName>
        <fullName evidence="1">Bifunctional protein FolD</fullName>
    </recommendedName>
    <domain>
        <recommendedName>
            <fullName evidence="1">Methylenetetrahydrofolate dehydrogenase</fullName>
            <ecNumber evidence="1">1.5.1.5</ecNumber>
        </recommendedName>
    </domain>
    <domain>
        <recommendedName>
            <fullName evidence="1">Methenyltetrahydrofolate cyclohydrolase</fullName>
            <ecNumber evidence="1">3.5.4.9</ecNumber>
        </recommendedName>
    </domain>
</protein>
<dbReference type="EC" id="1.5.1.5" evidence="1"/>
<dbReference type="EC" id="3.5.4.9" evidence="1"/>
<dbReference type="EMBL" id="CP000409">
    <property type="protein sequence ID" value="ABV73538.1"/>
    <property type="status" value="ALT_INIT"/>
    <property type="molecule type" value="Genomic_DNA"/>
</dbReference>
<dbReference type="RefSeq" id="WP_041405277.1">
    <property type="nucleotide sequence ID" value="NC_009879.1"/>
</dbReference>
<dbReference type="SMR" id="A8EYV5"/>
<dbReference type="STRING" id="293613.A1E_02990"/>
<dbReference type="KEGG" id="rcm:A1E_02990"/>
<dbReference type="eggNOG" id="COG0190">
    <property type="taxonomic scope" value="Bacteria"/>
</dbReference>
<dbReference type="HOGENOM" id="CLU_034045_2_0_5"/>
<dbReference type="UniPathway" id="UPA00193"/>
<dbReference type="Proteomes" id="UP000007056">
    <property type="component" value="Chromosome"/>
</dbReference>
<dbReference type="GO" id="GO:0005829">
    <property type="term" value="C:cytosol"/>
    <property type="evidence" value="ECO:0007669"/>
    <property type="project" value="TreeGrafter"/>
</dbReference>
<dbReference type="GO" id="GO:0004477">
    <property type="term" value="F:methenyltetrahydrofolate cyclohydrolase activity"/>
    <property type="evidence" value="ECO:0007669"/>
    <property type="project" value="UniProtKB-UniRule"/>
</dbReference>
<dbReference type="GO" id="GO:0004488">
    <property type="term" value="F:methylenetetrahydrofolate dehydrogenase (NADP+) activity"/>
    <property type="evidence" value="ECO:0007669"/>
    <property type="project" value="UniProtKB-UniRule"/>
</dbReference>
<dbReference type="GO" id="GO:0000105">
    <property type="term" value="P:L-histidine biosynthetic process"/>
    <property type="evidence" value="ECO:0007669"/>
    <property type="project" value="UniProtKB-KW"/>
</dbReference>
<dbReference type="GO" id="GO:0009086">
    <property type="term" value="P:methionine biosynthetic process"/>
    <property type="evidence" value="ECO:0007669"/>
    <property type="project" value="UniProtKB-KW"/>
</dbReference>
<dbReference type="GO" id="GO:0006164">
    <property type="term" value="P:purine nucleotide biosynthetic process"/>
    <property type="evidence" value="ECO:0007669"/>
    <property type="project" value="UniProtKB-KW"/>
</dbReference>
<dbReference type="GO" id="GO:0035999">
    <property type="term" value="P:tetrahydrofolate interconversion"/>
    <property type="evidence" value="ECO:0007669"/>
    <property type="project" value="UniProtKB-UniRule"/>
</dbReference>
<dbReference type="CDD" id="cd01080">
    <property type="entry name" value="NAD_bind_m-THF_DH_Cyclohyd"/>
    <property type="match status" value="1"/>
</dbReference>
<dbReference type="FunFam" id="3.40.50.720:FF:000094">
    <property type="entry name" value="Bifunctional protein FolD"/>
    <property type="match status" value="1"/>
</dbReference>
<dbReference type="FunFam" id="3.40.50.10860:FF:000005">
    <property type="entry name" value="C-1-tetrahydrofolate synthase, cytoplasmic, putative"/>
    <property type="match status" value="1"/>
</dbReference>
<dbReference type="Gene3D" id="3.40.50.10860">
    <property type="entry name" value="Leucine Dehydrogenase, chain A, domain 1"/>
    <property type="match status" value="1"/>
</dbReference>
<dbReference type="Gene3D" id="3.40.50.720">
    <property type="entry name" value="NAD(P)-binding Rossmann-like Domain"/>
    <property type="match status" value="1"/>
</dbReference>
<dbReference type="HAMAP" id="MF_01576">
    <property type="entry name" value="THF_DHG_CYH"/>
    <property type="match status" value="1"/>
</dbReference>
<dbReference type="InterPro" id="IPR046346">
    <property type="entry name" value="Aminoacid_DH-like_N_sf"/>
</dbReference>
<dbReference type="InterPro" id="IPR036291">
    <property type="entry name" value="NAD(P)-bd_dom_sf"/>
</dbReference>
<dbReference type="InterPro" id="IPR000672">
    <property type="entry name" value="THF_DH/CycHdrlase"/>
</dbReference>
<dbReference type="InterPro" id="IPR020630">
    <property type="entry name" value="THF_DH/CycHdrlase_cat_dom"/>
</dbReference>
<dbReference type="InterPro" id="IPR020867">
    <property type="entry name" value="THF_DH/CycHdrlase_CS"/>
</dbReference>
<dbReference type="InterPro" id="IPR020631">
    <property type="entry name" value="THF_DH/CycHdrlase_NAD-bd_dom"/>
</dbReference>
<dbReference type="NCBIfam" id="NF010768">
    <property type="entry name" value="PRK14171.1"/>
    <property type="match status" value="1"/>
</dbReference>
<dbReference type="PANTHER" id="PTHR48099:SF5">
    <property type="entry name" value="C-1-TETRAHYDROFOLATE SYNTHASE, CYTOPLASMIC"/>
    <property type="match status" value="1"/>
</dbReference>
<dbReference type="PANTHER" id="PTHR48099">
    <property type="entry name" value="C-1-TETRAHYDROFOLATE SYNTHASE, CYTOPLASMIC-RELATED"/>
    <property type="match status" value="1"/>
</dbReference>
<dbReference type="Pfam" id="PF00763">
    <property type="entry name" value="THF_DHG_CYH"/>
    <property type="match status" value="1"/>
</dbReference>
<dbReference type="Pfam" id="PF02882">
    <property type="entry name" value="THF_DHG_CYH_C"/>
    <property type="match status" value="1"/>
</dbReference>
<dbReference type="PRINTS" id="PR00085">
    <property type="entry name" value="THFDHDRGNASE"/>
</dbReference>
<dbReference type="SUPFAM" id="SSF53223">
    <property type="entry name" value="Aminoacid dehydrogenase-like, N-terminal domain"/>
    <property type="match status" value="1"/>
</dbReference>
<dbReference type="SUPFAM" id="SSF51735">
    <property type="entry name" value="NAD(P)-binding Rossmann-fold domains"/>
    <property type="match status" value="1"/>
</dbReference>
<dbReference type="PROSITE" id="PS00766">
    <property type="entry name" value="THF_DHG_CYH_1"/>
    <property type="match status" value="1"/>
</dbReference>
<dbReference type="PROSITE" id="PS00767">
    <property type="entry name" value="THF_DHG_CYH_2"/>
    <property type="match status" value="1"/>
</dbReference>
<keyword id="KW-0028">Amino-acid biosynthesis</keyword>
<keyword id="KW-0368">Histidine biosynthesis</keyword>
<keyword id="KW-0378">Hydrolase</keyword>
<keyword id="KW-0486">Methionine biosynthesis</keyword>
<keyword id="KW-0511">Multifunctional enzyme</keyword>
<keyword id="KW-0521">NADP</keyword>
<keyword id="KW-0554">One-carbon metabolism</keyword>
<keyword id="KW-0560">Oxidoreductase</keyword>
<keyword id="KW-0658">Purine biosynthesis</keyword>